<evidence type="ECO:0000255" key="1">
    <source>
        <dbReference type="HAMAP-Rule" id="MF_00041"/>
    </source>
</evidence>
<gene>
    <name evidence="1" type="primary">cysS</name>
    <name type="ordered locus">Desal_3356</name>
</gene>
<accession>C6BS23</accession>
<proteinExistence type="inferred from homology"/>
<sequence>MRLYNTLNRKKEEFVPLNGNKVNLYACGITAYDLCHIGHARSSVVFDILVRYLRFKGYDVTFVRNFTDIDDKIINRANETGVTSTELAEKFIGEFYVDMDKLNILRADIEPKCTEHIPEMIELTQTLIEKDHAYATPSGDVYFKVRSFDDYGKLSGRNIEDLQSGARIQPGEEKQDPLDFALWKAAKPGEPSWESPWGQGRPGWHLECSAMSEKYFELPFDIHGGGQDLSFPHHENEIAQSEAATGKEMARFWVHNGFVQINSEKMSKSLGNFFTIRDILDKFMPETLRYFLLTMHYRSPLDFSFEALEEAEKGIRRVYSALEQTAEALNKSKWSKAALPEEVLAEIEDAEKGWADAMEDDMNTAGAMGHMFTLIRLAGRIGEEKSWRKSEGGRDAWIRILEDMKKWGEVLGIFTRDPKEFLEELKLCMLERKGIEVAKVEELVAARQEARKNKDFARSDEIRDELIELGVEVKDTPQGAVWSVI</sequence>
<keyword id="KW-0030">Aminoacyl-tRNA synthetase</keyword>
<keyword id="KW-0067">ATP-binding</keyword>
<keyword id="KW-0963">Cytoplasm</keyword>
<keyword id="KW-0436">Ligase</keyword>
<keyword id="KW-0479">Metal-binding</keyword>
<keyword id="KW-0547">Nucleotide-binding</keyword>
<keyword id="KW-0648">Protein biosynthesis</keyword>
<keyword id="KW-1185">Reference proteome</keyword>
<keyword id="KW-0862">Zinc</keyword>
<dbReference type="EC" id="6.1.1.16" evidence="1"/>
<dbReference type="EMBL" id="CP001649">
    <property type="protein sequence ID" value="ACS81406.1"/>
    <property type="molecule type" value="Genomic_DNA"/>
</dbReference>
<dbReference type="RefSeq" id="WP_015853222.1">
    <property type="nucleotide sequence ID" value="NC_012881.1"/>
</dbReference>
<dbReference type="SMR" id="C6BS23"/>
<dbReference type="STRING" id="526222.Desal_3356"/>
<dbReference type="KEGG" id="dsa:Desal_3356"/>
<dbReference type="eggNOG" id="COG0215">
    <property type="taxonomic scope" value="Bacteria"/>
</dbReference>
<dbReference type="HOGENOM" id="CLU_013528_0_1_7"/>
<dbReference type="OrthoDB" id="9815130at2"/>
<dbReference type="Proteomes" id="UP000002601">
    <property type="component" value="Chromosome"/>
</dbReference>
<dbReference type="GO" id="GO:0005829">
    <property type="term" value="C:cytosol"/>
    <property type="evidence" value="ECO:0007669"/>
    <property type="project" value="TreeGrafter"/>
</dbReference>
<dbReference type="GO" id="GO:0005524">
    <property type="term" value="F:ATP binding"/>
    <property type="evidence" value="ECO:0007669"/>
    <property type="project" value="UniProtKB-UniRule"/>
</dbReference>
<dbReference type="GO" id="GO:0004817">
    <property type="term" value="F:cysteine-tRNA ligase activity"/>
    <property type="evidence" value="ECO:0007669"/>
    <property type="project" value="UniProtKB-UniRule"/>
</dbReference>
<dbReference type="GO" id="GO:0008270">
    <property type="term" value="F:zinc ion binding"/>
    <property type="evidence" value="ECO:0007669"/>
    <property type="project" value="UniProtKB-UniRule"/>
</dbReference>
<dbReference type="GO" id="GO:0006423">
    <property type="term" value="P:cysteinyl-tRNA aminoacylation"/>
    <property type="evidence" value="ECO:0007669"/>
    <property type="project" value="UniProtKB-UniRule"/>
</dbReference>
<dbReference type="CDD" id="cd00672">
    <property type="entry name" value="CysRS_core"/>
    <property type="match status" value="1"/>
</dbReference>
<dbReference type="FunFam" id="3.40.50.620:FF:000009">
    <property type="entry name" value="Cysteine--tRNA ligase"/>
    <property type="match status" value="1"/>
</dbReference>
<dbReference type="Gene3D" id="1.20.120.1910">
    <property type="entry name" value="Cysteine-tRNA ligase, C-terminal anti-codon recognition domain"/>
    <property type="match status" value="1"/>
</dbReference>
<dbReference type="Gene3D" id="3.40.50.620">
    <property type="entry name" value="HUPs"/>
    <property type="match status" value="1"/>
</dbReference>
<dbReference type="HAMAP" id="MF_00041">
    <property type="entry name" value="Cys_tRNA_synth"/>
    <property type="match status" value="1"/>
</dbReference>
<dbReference type="InterPro" id="IPR015803">
    <property type="entry name" value="Cys-tRNA-ligase"/>
</dbReference>
<dbReference type="InterPro" id="IPR015273">
    <property type="entry name" value="Cys-tRNA-synt_Ia_DALR"/>
</dbReference>
<dbReference type="InterPro" id="IPR024909">
    <property type="entry name" value="Cys-tRNA/MSH_ligase"/>
</dbReference>
<dbReference type="InterPro" id="IPR056411">
    <property type="entry name" value="CysS_C"/>
</dbReference>
<dbReference type="InterPro" id="IPR014729">
    <property type="entry name" value="Rossmann-like_a/b/a_fold"/>
</dbReference>
<dbReference type="InterPro" id="IPR032678">
    <property type="entry name" value="tRNA-synt_1_cat_dom"/>
</dbReference>
<dbReference type="InterPro" id="IPR009080">
    <property type="entry name" value="tRNAsynth_Ia_anticodon-bd"/>
</dbReference>
<dbReference type="NCBIfam" id="TIGR00435">
    <property type="entry name" value="cysS"/>
    <property type="match status" value="1"/>
</dbReference>
<dbReference type="PANTHER" id="PTHR10890:SF3">
    <property type="entry name" value="CYSTEINE--TRNA LIGASE, CYTOPLASMIC"/>
    <property type="match status" value="1"/>
</dbReference>
<dbReference type="PANTHER" id="PTHR10890">
    <property type="entry name" value="CYSTEINYL-TRNA SYNTHETASE"/>
    <property type="match status" value="1"/>
</dbReference>
<dbReference type="Pfam" id="PF23493">
    <property type="entry name" value="CysS_C"/>
    <property type="match status" value="1"/>
</dbReference>
<dbReference type="Pfam" id="PF09190">
    <property type="entry name" value="DALR_2"/>
    <property type="match status" value="1"/>
</dbReference>
<dbReference type="Pfam" id="PF01406">
    <property type="entry name" value="tRNA-synt_1e"/>
    <property type="match status" value="1"/>
</dbReference>
<dbReference type="PRINTS" id="PR00983">
    <property type="entry name" value="TRNASYNTHCYS"/>
</dbReference>
<dbReference type="SMART" id="SM00840">
    <property type="entry name" value="DALR_2"/>
    <property type="match status" value="1"/>
</dbReference>
<dbReference type="SUPFAM" id="SSF47323">
    <property type="entry name" value="Anticodon-binding domain of a subclass of class I aminoacyl-tRNA synthetases"/>
    <property type="match status" value="1"/>
</dbReference>
<dbReference type="SUPFAM" id="SSF52374">
    <property type="entry name" value="Nucleotidylyl transferase"/>
    <property type="match status" value="1"/>
</dbReference>
<comment type="catalytic activity">
    <reaction evidence="1">
        <text>tRNA(Cys) + L-cysteine + ATP = L-cysteinyl-tRNA(Cys) + AMP + diphosphate</text>
        <dbReference type="Rhea" id="RHEA:17773"/>
        <dbReference type="Rhea" id="RHEA-COMP:9661"/>
        <dbReference type="Rhea" id="RHEA-COMP:9679"/>
        <dbReference type="ChEBI" id="CHEBI:30616"/>
        <dbReference type="ChEBI" id="CHEBI:33019"/>
        <dbReference type="ChEBI" id="CHEBI:35235"/>
        <dbReference type="ChEBI" id="CHEBI:78442"/>
        <dbReference type="ChEBI" id="CHEBI:78517"/>
        <dbReference type="ChEBI" id="CHEBI:456215"/>
        <dbReference type="EC" id="6.1.1.16"/>
    </reaction>
</comment>
<comment type="cofactor">
    <cofactor evidence="1">
        <name>Zn(2+)</name>
        <dbReference type="ChEBI" id="CHEBI:29105"/>
    </cofactor>
    <text evidence="1">Binds 1 zinc ion per subunit.</text>
</comment>
<comment type="subunit">
    <text evidence="1">Monomer.</text>
</comment>
<comment type="subcellular location">
    <subcellularLocation>
        <location evidence="1">Cytoplasm</location>
    </subcellularLocation>
</comment>
<comment type="similarity">
    <text evidence="1">Belongs to the class-I aminoacyl-tRNA synthetase family.</text>
</comment>
<feature type="chain" id="PRO_1000202118" description="Cysteine--tRNA ligase">
    <location>
        <begin position="1"/>
        <end position="485"/>
    </location>
</feature>
<feature type="short sequence motif" description="'HIGH' region">
    <location>
        <begin position="29"/>
        <end position="39"/>
    </location>
</feature>
<feature type="short sequence motif" description="'KMSKS' region">
    <location>
        <begin position="265"/>
        <end position="269"/>
    </location>
</feature>
<feature type="binding site" evidence="1">
    <location>
        <position position="27"/>
    </location>
    <ligand>
        <name>Zn(2+)</name>
        <dbReference type="ChEBI" id="CHEBI:29105"/>
    </ligand>
</feature>
<feature type="binding site" evidence="1">
    <location>
        <position position="208"/>
    </location>
    <ligand>
        <name>Zn(2+)</name>
        <dbReference type="ChEBI" id="CHEBI:29105"/>
    </ligand>
</feature>
<feature type="binding site" evidence="1">
    <location>
        <position position="233"/>
    </location>
    <ligand>
        <name>Zn(2+)</name>
        <dbReference type="ChEBI" id="CHEBI:29105"/>
    </ligand>
</feature>
<feature type="binding site" evidence="1">
    <location>
        <position position="237"/>
    </location>
    <ligand>
        <name>Zn(2+)</name>
        <dbReference type="ChEBI" id="CHEBI:29105"/>
    </ligand>
</feature>
<feature type="binding site" evidence="1">
    <location>
        <position position="268"/>
    </location>
    <ligand>
        <name>ATP</name>
        <dbReference type="ChEBI" id="CHEBI:30616"/>
    </ligand>
</feature>
<reference key="1">
    <citation type="submission" date="2009-06" db="EMBL/GenBank/DDBJ databases">
        <title>Complete sequence of Desulfovibrio salexigens DSM 2638.</title>
        <authorList>
            <consortium name="US DOE Joint Genome Institute"/>
            <person name="Lucas S."/>
            <person name="Copeland A."/>
            <person name="Lapidus A."/>
            <person name="Glavina del Rio T."/>
            <person name="Tice H."/>
            <person name="Bruce D."/>
            <person name="Goodwin L."/>
            <person name="Pitluck S."/>
            <person name="Munk A.C."/>
            <person name="Brettin T."/>
            <person name="Detter J.C."/>
            <person name="Han C."/>
            <person name="Tapia R."/>
            <person name="Larimer F."/>
            <person name="Land M."/>
            <person name="Hauser L."/>
            <person name="Kyrpides N."/>
            <person name="Anderson I."/>
            <person name="Wall J.D."/>
            <person name="Arkin A.P."/>
            <person name="Dehal P."/>
            <person name="Chivian D."/>
            <person name="Giles B."/>
            <person name="Hazen T.C."/>
        </authorList>
    </citation>
    <scope>NUCLEOTIDE SEQUENCE [LARGE SCALE GENOMIC DNA]</scope>
    <source>
        <strain>ATCC 14822 / DSM 2638 / NCIMB 8403 / VKM B-1763</strain>
    </source>
</reference>
<protein>
    <recommendedName>
        <fullName evidence="1">Cysteine--tRNA ligase</fullName>
        <ecNumber evidence="1">6.1.1.16</ecNumber>
    </recommendedName>
    <alternativeName>
        <fullName evidence="1">Cysteinyl-tRNA synthetase</fullName>
        <shortName evidence="1">CysRS</shortName>
    </alternativeName>
</protein>
<organism>
    <name type="scientific">Maridesulfovibrio salexigens (strain ATCC 14822 / DSM 2638 / NCIMB 8403 / VKM B-1763)</name>
    <name type="common">Desulfovibrio salexigens</name>
    <dbReference type="NCBI Taxonomy" id="526222"/>
    <lineage>
        <taxon>Bacteria</taxon>
        <taxon>Pseudomonadati</taxon>
        <taxon>Thermodesulfobacteriota</taxon>
        <taxon>Desulfovibrionia</taxon>
        <taxon>Desulfovibrionales</taxon>
        <taxon>Desulfovibrionaceae</taxon>
        <taxon>Maridesulfovibrio</taxon>
    </lineage>
</organism>
<name>SYC_MARSD</name>